<sequence length="126" mass="13999">MPTINQLVRKGRQSETTKSKSPALQDCPQRRGVCTRVYTTTPKKPNSALRKVAKVRLTNGFEVISYIGGEGHNLQEHSVVLIRGGRVKDLPGVRYHMVRGSLDTQGVKDRKQARSKYGAKRAKAAK</sequence>
<reference key="1">
    <citation type="journal article" date="2009" name="J. Bacteriol.">
        <title>The genome of Burkholderia cenocepacia J2315, an epidemic pathogen of cystic fibrosis patients.</title>
        <authorList>
            <person name="Holden M.T."/>
            <person name="Seth-Smith H.M."/>
            <person name="Crossman L.C."/>
            <person name="Sebaihia M."/>
            <person name="Bentley S.D."/>
            <person name="Cerdeno-Tarraga A.M."/>
            <person name="Thomson N.R."/>
            <person name="Bason N."/>
            <person name="Quail M.A."/>
            <person name="Sharp S."/>
            <person name="Cherevach I."/>
            <person name="Churcher C."/>
            <person name="Goodhead I."/>
            <person name="Hauser H."/>
            <person name="Holroyd N."/>
            <person name="Mungall K."/>
            <person name="Scott P."/>
            <person name="Walker D."/>
            <person name="White B."/>
            <person name="Rose H."/>
            <person name="Iversen P."/>
            <person name="Mil-Homens D."/>
            <person name="Rocha E.P."/>
            <person name="Fialho A.M."/>
            <person name="Baldwin A."/>
            <person name="Dowson C."/>
            <person name="Barrell B.G."/>
            <person name="Govan J.R."/>
            <person name="Vandamme P."/>
            <person name="Hart C.A."/>
            <person name="Mahenthiralingam E."/>
            <person name="Parkhill J."/>
        </authorList>
    </citation>
    <scope>NUCLEOTIDE SEQUENCE [LARGE SCALE GENOMIC DNA]</scope>
    <source>
        <strain>ATCC BAA-245 / DSM 16553 / LMG 16656 / NCTC 13227 / J2315 / CF5610</strain>
    </source>
</reference>
<name>RS12_BURCJ</name>
<comment type="function">
    <text evidence="2">With S4 and S5 plays an important role in translational accuracy.</text>
</comment>
<comment type="function">
    <text evidence="2">Interacts with and stabilizes bases of the 16S rRNA that are involved in tRNA selection in the A site and with the mRNA backbone. Located at the interface of the 30S and 50S subunits, it traverses the body of the 30S subunit contacting proteins on the other side and probably holding the rRNA structure together. The combined cluster of proteins S8, S12 and S17 appears to hold together the shoulder and platform of the 30S subunit.</text>
</comment>
<comment type="subunit">
    <text evidence="2">Part of the 30S ribosomal subunit. Contacts proteins S8 and S17. May interact with IF1 in the 30S initiation complex.</text>
</comment>
<comment type="similarity">
    <text evidence="2">Belongs to the universal ribosomal protein uS12 family.</text>
</comment>
<protein>
    <recommendedName>
        <fullName evidence="2">Small ribosomal subunit protein uS12</fullName>
    </recommendedName>
    <alternativeName>
        <fullName evidence="4">30S ribosomal protein S12</fullName>
    </alternativeName>
</protein>
<organism>
    <name type="scientific">Burkholderia cenocepacia (strain ATCC BAA-245 / DSM 16553 / LMG 16656 / NCTC 13227 / J2315 / CF5610)</name>
    <name type="common">Burkholderia cepacia (strain J2315)</name>
    <dbReference type="NCBI Taxonomy" id="216591"/>
    <lineage>
        <taxon>Bacteria</taxon>
        <taxon>Pseudomonadati</taxon>
        <taxon>Pseudomonadota</taxon>
        <taxon>Betaproteobacteria</taxon>
        <taxon>Burkholderiales</taxon>
        <taxon>Burkholderiaceae</taxon>
        <taxon>Burkholderia</taxon>
        <taxon>Burkholderia cepacia complex</taxon>
    </lineage>
</organism>
<proteinExistence type="inferred from homology"/>
<accession>B4E5B5</accession>
<keyword id="KW-0488">Methylation</keyword>
<keyword id="KW-0687">Ribonucleoprotein</keyword>
<keyword id="KW-0689">Ribosomal protein</keyword>
<keyword id="KW-0694">RNA-binding</keyword>
<keyword id="KW-0699">rRNA-binding</keyword>
<keyword id="KW-0820">tRNA-binding</keyword>
<evidence type="ECO:0000250" key="1"/>
<evidence type="ECO:0000255" key="2">
    <source>
        <dbReference type="HAMAP-Rule" id="MF_00403"/>
    </source>
</evidence>
<evidence type="ECO:0000256" key="3">
    <source>
        <dbReference type="SAM" id="MobiDB-lite"/>
    </source>
</evidence>
<evidence type="ECO:0000305" key="4"/>
<gene>
    <name evidence="2" type="primary">rpsL</name>
    <name type="ordered locus">BceJ2315_02320</name>
    <name type="ORF">BCAL0229</name>
</gene>
<dbReference type="EMBL" id="AM747720">
    <property type="protein sequence ID" value="CAR50540.1"/>
    <property type="molecule type" value="Genomic_DNA"/>
</dbReference>
<dbReference type="RefSeq" id="WP_006400662.1">
    <property type="nucleotide sequence ID" value="NC_011000.1"/>
</dbReference>
<dbReference type="SMR" id="B4E5B5"/>
<dbReference type="GeneID" id="98108172"/>
<dbReference type="KEGG" id="bcj:BCAL0229"/>
<dbReference type="eggNOG" id="COG0048">
    <property type="taxonomic scope" value="Bacteria"/>
</dbReference>
<dbReference type="HOGENOM" id="CLU_104295_1_2_4"/>
<dbReference type="BioCyc" id="BCEN216591:G1G1V-272-MONOMER"/>
<dbReference type="Proteomes" id="UP000001035">
    <property type="component" value="Chromosome 1"/>
</dbReference>
<dbReference type="GO" id="GO:0015935">
    <property type="term" value="C:small ribosomal subunit"/>
    <property type="evidence" value="ECO:0007669"/>
    <property type="project" value="InterPro"/>
</dbReference>
<dbReference type="GO" id="GO:0019843">
    <property type="term" value="F:rRNA binding"/>
    <property type="evidence" value="ECO:0007669"/>
    <property type="project" value="UniProtKB-UniRule"/>
</dbReference>
<dbReference type="GO" id="GO:0003735">
    <property type="term" value="F:structural constituent of ribosome"/>
    <property type="evidence" value="ECO:0007669"/>
    <property type="project" value="InterPro"/>
</dbReference>
<dbReference type="GO" id="GO:0000049">
    <property type="term" value="F:tRNA binding"/>
    <property type="evidence" value="ECO:0007669"/>
    <property type="project" value="UniProtKB-UniRule"/>
</dbReference>
<dbReference type="GO" id="GO:0006412">
    <property type="term" value="P:translation"/>
    <property type="evidence" value="ECO:0007669"/>
    <property type="project" value="UniProtKB-UniRule"/>
</dbReference>
<dbReference type="CDD" id="cd03368">
    <property type="entry name" value="Ribosomal_S12"/>
    <property type="match status" value="1"/>
</dbReference>
<dbReference type="FunFam" id="2.40.50.140:FF:000001">
    <property type="entry name" value="30S ribosomal protein S12"/>
    <property type="match status" value="1"/>
</dbReference>
<dbReference type="Gene3D" id="2.40.50.140">
    <property type="entry name" value="Nucleic acid-binding proteins"/>
    <property type="match status" value="1"/>
</dbReference>
<dbReference type="HAMAP" id="MF_00403_B">
    <property type="entry name" value="Ribosomal_uS12_B"/>
    <property type="match status" value="1"/>
</dbReference>
<dbReference type="InterPro" id="IPR012340">
    <property type="entry name" value="NA-bd_OB-fold"/>
</dbReference>
<dbReference type="InterPro" id="IPR006032">
    <property type="entry name" value="Ribosomal_uS12"/>
</dbReference>
<dbReference type="InterPro" id="IPR005679">
    <property type="entry name" value="Ribosomal_uS12_bac"/>
</dbReference>
<dbReference type="NCBIfam" id="TIGR00981">
    <property type="entry name" value="rpsL_bact"/>
    <property type="match status" value="1"/>
</dbReference>
<dbReference type="PANTHER" id="PTHR11652">
    <property type="entry name" value="30S RIBOSOMAL PROTEIN S12 FAMILY MEMBER"/>
    <property type="match status" value="1"/>
</dbReference>
<dbReference type="Pfam" id="PF00164">
    <property type="entry name" value="Ribosom_S12_S23"/>
    <property type="match status" value="1"/>
</dbReference>
<dbReference type="PIRSF" id="PIRSF002133">
    <property type="entry name" value="Ribosomal_S12/S23"/>
    <property type="match status" value="1"/>
</dbReference>
<dbReference type="PRINTS" id="PR01034">
    <property type="entry name" value="RIBOSOMALS12"/>
</dbReference>
<dbReference type="SUPFAM" id="SSF50249">
    <property type="entry name" value="Nucleic acid-binding proteins"/>
    <property type="match status" value="1"/>
</dbReference>
<dbReference type="PROSITE" id="PS00055">
    <property type="entry name" value="RIBOSOMAL_S12"/>
    <property type="match status" value="1"/>
</dbReference>
<feature type="chain" id="PRO_1000194137" description="Small ribosomal subunit protein uS12">
    <location>
        <begin position="1"/>
        <end position="126"/>
    </location>
</feature>
<feature type="region of interest" description="Disordered" evidence="3">
    <location>
        <begin position="1"/>
        <end position="28"/>
    </location>
</feature>
<feature type="region of interest" description="Disordered" evidence="3">
    <location>
        <begin position="103"/>
        <end position="126"/>
    </location>
</feature>
<feature type="compositionally biased region" description="Basic residues" evidence="3">
    <location>
        <begin position="113"/>
        <end position="126"/>
    </location>
</feature>
<feature type="modified residue" description="3-methylthioaspartic acid" evidence="1">
    <location>
        <position position="89"/>
    </location>
</feature>